<sequence>EDLQGDAVPETSATKDDNEXPEMIPMSLPPELEINKPFILIIYDDNTKSPLFV</sequence>
<dbReference type="PIR" id="A61219">
    <property type="entry name" value="A61219"/>
</dbReference>
<dbReference type="InParanoid" id="P38028"/>
<dbReference type="Proteomes" id="UP000002281">
    <property type="component" value="Unplaced"/>
</dbReference>
<dbReference type="GO" id="GO:0005576">
    <property type="term" value="C:extracellular region"/>
    <property type="evidence" value="ECO:0007669"/>
    <property type="project" value="UniProtKB-SubCell"/>
</dbReference>
<dbReference type="GO" id="GO:0004867">
    <property type="term" value="F:serine-type endopeptidase inhibitor activity"/>
    <property type="evidence" value="ECO:0007669"/>
    <property type="project" value="UniProtKB-KW"/>
</dbReference>
<dbReference type="GO" id="GO:0006953">
    <property type="term" value="P:acute-phase response"/>
    <property type="evidence" value="ECO:0007669"/>
    <property type="project" value="UniProtKB-KW"/>
</dbReference>
<dbReference type="Gene3D" id="2.10.310.10">
    <property type="entry name" value="Serpins superfamily"/>
    <property type="match status" value="1"/>
</dbReference>
<dbReference type="InterPro" id="IPR023795">
    <property type="entry name" value="Serpin_CS"/>
</dbReference>
<dbReference type="InterPro" id="IPR036186">
    <property type="entry name" value="Serpin_sf"/>
</dbReference>
<dbReference type="SUPFAM" id="SSF56574">
    <property type="entry name" value="Serpins"/>
    <property type="match status" value="1"/>
</dbReference>
<dbReference type="PROSITE" id="PS00284">
    <property type="entry name" value="SERPIN"/>
    <property type="match status" value="1"/>
</dbReference>
<protein>
    <recommendedName>
        <fullName>Alpha-1-antiproteinase 1</fullName>
    </recommendedName>
    <alternativeName>
        <fullName>Alpha-1-antitrypsin 1</fullName>
    </alternativeName>
    <alternativeName>
        <fullName>Alpha-1-proteinase inhibitor 1</fullName>
    </alternativeName>
    <alternativeName>
        <fullName>SPI1</fullName>
    </alternativeName>
</protein>
<reference key="1">
    <citation type="journal article" date="1991" name="Biochem. Genet.">
        <title>The equine major plasma serpin multigene family: partial characterization including sequence of the reactive-site regions.</title>
        <authorList>
            <person name="Patterson S.D."/>
            <person name="Bell K."/>
            <person name="Shaw D.C."/>
        </authorList>
    </citation>
    <scope>PROTEIN SEQUENCE</scope>
    <source>
        <tissue>Plasma</tissue>
    </source>
</reference>
<reference key="2">
    <citation type="journal article" date="1990" name="Biochem. Int.">
        <title>The carbohydrate side chains of the major plasma serpins of horse and wallaby: analyses of enzymatic and chemically treated (including 'Smith degradation') protein blots by lectin binding.</title>
        <authorList>
            <person name="Patterson S.D."/>
            <person name="Bell K."/>
        </authorList>
    </citation>
    <scope>STRUCTURE OF CARBOHYDRATES</scope>
</reference>
<feature type="chain" id="PRO_0000094092" description="Alpha-1-antiproteinase 1">
    <location>
        <begin position="1"/>
        <end position="53" status="greater than"/>
    </location>
</feature>
<feature type="region of interest" description="Disordered" evidence="2">
    <location>
        <begin position="1"/>
        <end position="28"/>
    </location>
</feature>
<feature type="site" description="Reactive bond">
    <location>
        <begin position="26"/>
        <end position="27"/>
    </location>
</feature>
<feature type="non-consecutive residues" evidence="3">
    <location>
        <begin position="21"/>
        <end position="22"/>
    </location>
</feature>
<feature type="non-terminal residue">
    <location>
        <position position="53"/>
    </location>
</feature>
<keyword id="KW-0011">Acute phase</keyword>
<keyword id="KW-0903">Direct protein sequencing</keyword>
<keyword id="KW-0325">Glycoprotein</keyword>
<keyword id="KW-0646">Protease inhibitor</keyword>
<keyword id="KW-1185">Reference proteome</keyword>
<keyword id="KW-0964">Secreted</keyword>
<keyword id="KW-0722">Serine protease inhibitor</keyword>
<comment type="subcellular location">
    <subcellularLocation>
        <location>Secreted</location>
    </subcellularLocation>
</comment>
<comment type="tissue specificity">
    <text>Plasma.</text>
</comment>
<comment type="domain">
    <text evidence="1">The reactive center loop (RCL) extends out from the body of the protein and directs binding to the target protease. The protease cleaves the serpin at the reactive site within the RCL, establishing a covalent linkage between the carboxyl group of the serpin reactive site and the serine hydroxyl of the protease. The resulting inactive serpin-protease complex is highly stable (By similarity).</text>
</comment>
<comment type="PTM">
    <text>N-glycosylated; contains biantennary glycans.</text>
</comment>
<comment type="similarity">
    <text evidence="3">Belongs to the serpin family.</text>
</comment>
<organism>
    <name type="scientific">Equus caballus</name>
    <name type="common">Horse</name>
    <dbReference type="NCBI Taxonomy" id="9796"/>
    <lineage>
        <taxon>Eukaryota</taxon>
        <taxon>Metazoa</taxon>
        <taxon>Chordata</taxon>
        <taxon>Craniata</taxon>
        <taxon>Vertebrata</taxon>
        <taxon>Euteleostomi</taxon>
        <taxon>Mammalia</taxon>
        <taxon>Eutheria</taxon>
        <taxon>Laurasiatheria</taxon>
        <taxon>Perissodactyla</taxon>
        <taxon>Equidae</taxon>
        <taxon>Equus</taxon>
    </lineage>
</organism>
<proteinExistence type="evidence at protein level"/>
<evidence type="ECO:0000250" key="1"/>
<evidence type="ECO:0000256" key="2">
    <source>
        <dbReference type="SAM" id="MobiDB-lite"/>
    </source>
</evidence>
<evidence type="ECO:0000305" key="3"/>
<accession>P38028</accession>
<name>A1AT1_HORSE</name>